<proteinExistence type="evidence at protein level"/>
<gene>
    <name evidence="13" type="primary">ptp-2</name>
    <name evidence="13" type="ORF">F59G1.5</name>
</gene>
<reference evidence="11" key="1">
    <citation type="journal article" date="1998" name="Genes Dev.">
        <title>The Caenorhabditis elegans SH2 domain-containing protein tyrosine phosphatase PTP-2 participates in signal transduction during oogenesis and vulval development.</title>
        <authorList>
            <person name="Gutch M.J."/>
            <person name="Flint A.J."/>
            <person name="Keller J."/>
            <person name="Tonks N.K."/>
            <person name="Hengartner M.O."/>
        </authorList>
    </citation>
    <scope>NUCLEOTIDE SEQUENCE [MRNA]</scope>
    <scope>FUNCTION</scope>
</reference>
<reference evidence="12" key="2">
    <citation type="journal article" date="1998" name="Science">
        <title>Genome sequence of the nematode C. elegans: a platform for investigating biology.</title>
        <authorList>
            <consortium name="The C. elegans sequencing consortium"/>
        </authorList>
    </citation>
    <scope>NUCLEOTIDE SEQUENCE [LARGE SCALE GENOMIC DNA]</scope>
    <source>
        <strain evidence="12">Bristol N2</strain>
    </source>
</reference>
<reference evidence="10" key="3">
    <citation type="journal article" date="2001" name="Mol. Cell. Biol.">
        <title>The Caenorhabditis elegans EGL-15 signaling pathway implicates a DOS-like multisubstrate adaptor protein in fibroblast growth factor signal transduction.</title>
        <authorList>
            <person name="Schutzman J.L."/>
            <person name="Borland C.Z."/>
            <person name="Newman J.C."/>
            <person name="Robinson M.K."/>
            <person name="Kokel M."/>
            <person name="Stern M.J."/>
        </authorList>
    </citation>
    <scope>FUNCTION</scope>
    <scope>MUTAGENESIS OF ARG-36; ARG-159 AND CYS-518</scope>
</reference>
<reference evidence="10" key="4">
    <citation type="journal article" date="2006" name="Development">
        <title>FGF negatively regulates muscle membrane extension in Caenorhabditis elegans.</title>
        <authorList>
            <person name="Dixon S.J."/>
            <person name="Alexander M."/>
            <person name="Fernandes R."/>
            <person name="Ricker N."/>
            <person name="Roy P.J."/>
        </authorList>
    </citation>
    <scope>FUNCTION</scope>
    <scope>DISRUPTION PHENOTYPE</scope>
</reference>
<reference evidence="10" key="5">
    <citation type="journal article" date="2006" name="Genetics">
        <title>The adaptor protein soc-1/Gab1 modifies growth factor receptor output in Caenorhabditis elegans.</title>
        <authorList>
            <person name="Hopper N.A."/>
        </authorList>
    </citation>
    <scope>FUNCTION</scope>
    <scope>DISRUPTION PHENOTYPE</scope>
</reference>
<reference evidence="10" key="6">
    <citation type="journal article" date="2010" name="Dev. Biol.">
        <title>MSP hormonal control of the oocyte MAP kinase cascade and reactive oxygen species signaling.</title>
        <authorList>
            <person name="Yang Y."/>
            <person name="Han S.M."/>
            <person name="Miller M.A."/>
        </authorList>
    </citation>
    <scope>FUNCTION</scope>
    <scope>SUBCELLULAR LOCATION</scope>
    <scope>TISSUE SPECIFICITY</scope>
</reference>
<evidence type="ECO:0000255" key="1">
    <source>
        <dbReference type="PIRNR" id="PIRNR000929"/>
    </source>
</evidence>
<evidence type="ECO:0000255" key="2">
    <source>
        <dbReference type="PROSITE-ProRule" id="PRU00160"/>
    </source>
</evidence>
<evidence type="ECO:0000255" key="3">
    <source>
        <dbReference type="PROSITE-ProRule" id="PRU00191"/>
    </source>
</evidence>
<evidence type="ECO:0000256" key="4">
    <source>
        <dbReference type="SAM" id="MobiDB-lite"/>
    </source>
</evidence>
<evidence type="ECO:0000269" key="5">
    <source>
    </source>
</evidence>
<evidence type="ECO:0000269" key="6">
    <source>
    </source>
</evidence>
<evidence type="ECO:0000269" key="7">
    <source>
    </source>
</evidence>
<evidence type="ECO:0000269" key="8">
    <source>
    </source>
</evidence>
<evidence type="ECO:0000269" key="9">
    <source>
    </source>
</evidence>
<evidence type="ECO:0000305" key="10"/>
<evidence type="ECO:0000312" key="11">
    <source>
        <dbReference type="EMBL" id="AAC21678.1"/>
    </source>
</evidence>
<evidence type="ECO:0000312" key="12">
    <source>
        <dbReference type="Proteomes" id="UP000001940"/>
    </source>
</evidence>
<evidence type="ECO:0000312" key="13">
    <source>
        <dbReference type="WormBase" id="F59G1.5"/>
    </source>
</evidence>
<keyword id="KW-0963">Cytoplasm</keyword>
<keyword id="KW-0221">Differentiation</keyword>
<keyword id="KW-0378">Hydrolase</keyword>
<keyword id="KW-0896">Oogenesis</keyword>
<keyword id="KW-0904">Protein phosphatase</keyword>
<keyword id="KW-1185">Reference proteome</keyword>
<keyword id="KW-0677">Repeat</keyword>
<keyword id="KW-0727">SH2 domain</keyword>
<name>PTP2_CAEEL</name>
<accession>G5EC24</accession>
<dbReference type="EC" id="3.1.3.48" evidence="1"/>
<dbReference type="EMBL" id="AF015882">
    <property type="protein sequence ID" value="AAC21678.1"/>
    <property type="molecule type" value="mRNA"/>
</dbReference>
<dbReference type="EMBL" id="BX284602">
    <property type="protein sequence ID" value="CCD70155.1"/>
    <property type="molecule type" value="Genomic_DNA"/>
</dbReference>
<dbReference type="PIR" id="T34317">
    <property type="entry name" value="T34317"/>
</dbReference>
<dbReference type="RefSeq" id="NP_001293512.1">
    <property type="nucleotide sequence ID" value="NM_001306583.2"/>
</dbReference>
<dbReference type="SMR" id="G5EC24"/>
<dbReference type="FunCoup" id="G5EC24">
    <property type="interactions" value="2851"/>
</dbReference>
<dbReference type="STRING" id="6239.F59G1.5.2"/>
<dbReference type="PaxDb" id="6239-F59G1.5.2"/>
<dbReference type="PeptideAtlas" id="G5EC24"/>
<dbReference type="EnsemblMetazoa" id="F59G1.5.1">
    <property type="protein sequence ID" value="F59G1.5.1"/>
    <property type="gene ID" value="WBGene00004214"/>
</dbReference>
<dbReference type="GeneID" id="24104681"/>
<dbReference type="KEGG" id="cel:CELE_F59G1.5"/>
<dbReference type="AGR" id="WB:WBGene00004214"/>
<dbReference type="CTD" id="24104681"/>
<dbReference type="WormBase" id="F59G1.5">
    <property type="protein sequence ID" value="CE02705"/>
    <property type="gene ID" value="WBGene00004214"/>
    <property type="gene designation" value="ptp-2"/>
</dbReference>
<dbReference type="eggNOG" id="KOG0790">
    <property type="taxonomic scope" value="Eukaryota"/>
</dbReference>
<dbReference type="GeneTree" id="ENSGT00940000167235"/>
<dbReference type="HOGENOM" id="CLU_001645_9_10_1"/>
<dbReference type="InParanoid" id="G5EC24"/>
<dbReference type="OMA" id="ESMAYKQ"/>
<dbReference type="OrthoDB" id="8815311at2759"/>
<dbReference type="PhylomeDB" id="G5EC24"/>
<dbReference type="Reactome" id="R-CEL-6798695">
    <property type="pathway name" value="Neutrophil degranulation"/>
</dbReference>
<dbReference type="PRO" id="PR:G5EC24"/>
<dbReference type="Proteomes" id="UP000001940">
    <property type="component" value="Chromosome II"/>
</dbReference>
<dbReference type="Bgee" id="WBGene00004214">
    <property type="expression patterns" value="Expressed in germ line (C elegans) and 4 other cell types or tissues"/>
</dbReference>
<dbReference type="GO" id="GO:0005737">
    <property type="term" value="C:cytoplasm"/>
    <property type="evidence" value="ECO:0000314"/>
    <property type="project" value="WormBase"/>
</dbReference>
<dbReference type="GO" id="GO:0031410">
    <property type="term" value="C:cytoplasmic vesicle"/>
    <property type="evidence" value="ECO:0000314"/>
    <property type="project" value="WormBase"/>
</dbReference>
<dbReference type="GO" id="GO:0004726">
    <property type="term" value="F:non-membrane spanning protein tyrosine phosphatase activity"/>
    <property type="evidence" value="ECO:0000318"/>
    <property type="project" value="GO_Central"/>
</dbReference>
<dbReference type="GO" id="GO:0001784">
    <property type="term" value="F:phosphotyrosine residue binding"/>
    <property type="evidence" value="ECO:0000318"/>
    <property type="project" value="GO_Central"/>
</dbReference>
<dbReference type="GO" id="GO:0030154">
    <property type="term" value="P:cell differentiation"/>
    <property type="evidence" value="ECO:0000318"/>
    <property type="project" value="GO_Central"/>
</dbReference>
<dbReference type="GO" id="GO:0000165">
    <property type="term" value="P:MAPK cascade"/>
    <property type="evidence" value="ECO:0000318"/>
    <property type="project" value="GO_Central"/>
</dbReference>
<dbReference type="GO" id="GO:0000278">
    <property type="term" value="P:mitotic cell cycle"/>
    <property type="evidence" value="ECO:0000318"/>
    <property type="project" value="GO_Central"/>
</dbReference>
<dbReference type="GO" id="GO:0007517">
    <property type="term" value="P:muscle organ development"/>
    <property type="evidence" value="ECO:0000315"/>
    <property type="project" value="WormBase"/>
</dbReference>
<dbReference type="GO" id="GO:0002119">
    <property type="term" value="P:nematode larval development"/>
    <property type="evidence" value="ECO:0000316"/>
    <property type="project" value="WormBase"/>
</dbReference>
<dbReference type="GO" id="GO:0048477">
    <property type="term" value="P:oogenesis"/>
    <property type="evidence" value="ECO:0000315"/>
    <property type="project" value="WormBase"/>
</dbReference>
<dbReference type="GO" id="GO:0045742">
    <property type="term" value="P:positive regulation of epidermal growth factor receptor signaling pathway"/>
    <property type="evidence" value="ECO:0000316"/>
    <property type="project" value="WormBase"/>
</dbReference>
<dbReference type="GO" id="GO:0046579">
    <property type="term" value="P:positive regulation of Ras protein signal transduction"/>
    <property type="evidence" value="ECO:0000316"/>
    <property type="project" value="WormBase"/>
</dbReference>
<dbReference type="GO" id="GO:0040026">
    <property type="term" value="P:positive regulation of vulval development"/>
    <property type="evidence" value="ECO:0000316"/>
    <property type="project" value="WormBase"/>
</dbReference>
<dbReference type="GO" id="GO:0031344">
    <property type="term" value="P:regulation of cell projection organization"/>
    <property type="evidence" value="ECO:0000315"/>
    <property type="project" value="WormBase"/>
</dbReference>
<dbReference type="CDD" id="cd10340">
    <property type="entry name" value="SH2_N-SH2_SHP_like"/>
    <property type="match status" value="1"/>
</dbReference>
<dbReference type="FunFam" id="3.30.505.10:FF:000018">
    <property type="entry name" value="Tyrosine-protein phosphatase non-receptor type"/>
    <property type="match status" value="1"/>
</dbReference>
<dbReference type="FunFam" id="3.30.505.10:FF:000161">
    <property type="entry name" value="Tyrosine-protein phosphatase non-receptor type"/>
    <property type="match status" value="1"/>
</dbReference>
<dbReference type="Gene3D" id="3.90.190.10">
    <property type="entry name" value="Protein tyrosine phosphatase superfamily"/>
    <property type="match status" value="1"/>
</dbReference>
<dbReference type="Gene3D" id="3.30.505.10">
    <property type="entry name" value="SH2 domain"/>
    <property type="match status" value="2"/>
</dbReference>
<dbReference type="InterPro" id="IPR052123">
    <property type="entry name" value="Non-rcpt_Tyr_Phosphatase"/>
</dbReference>
<dbReference type="InterPro" id="IPR029021">
    <property type="entry name" value="Prot-tyrosine_phosphatase-like"/>
</dbReference>
<dbReference type="InterPro" id="IPR000242">
    <property type="entry name" value="PTP_cat"/>
</dbReference>
<dbReference type="InterPro" id="IPR000980">
    <property type="entry name" value="SH2"/>
</dbReference>
<dbReference type="InterPro" id="IPR036860">
    <property type="entry name" value="SH2_dom_sf"/>
</dbReference>
<dbReference type="InterPro" id="IPR016130">
    <property type="entry name" value="Tyr_Pase_AS"/>
</dbReference>
<dbReference type="InterPro" id="IPR003595">
    <property type="entry name" value="Tyr_Pase_cat"/>
</dbReference>
<dbReference type="InterPro" id="IPR000387">
    <property type="entry name" value="Tyr_Pase_dom"/>
</dbReference>
<dbReference type="InterPro" id="IPR012152">
    <property type="entry name" value="Tyr_Pase_non-rcpt_typ-6/11"/>
</dbReference>
<dbReference type="PANTHER" id="PTHR46257">
    <property type="entry name" value="TYROSINE-PROTEIN PHOSPHATASE CORKSCREW"/>
    <property type="match status" value="1"/>
</dbReference>
<dbReference type="PANTHER" id="PTHR46257:SF3">
    <property type="entry name" value="TYROSINE-PROTEIN PHOSPHATASE CORKSCREW"/>
    <property type="match status" value="1"/>
</dbReference>
<dbReference type="Pfam" id="PF00017">
    <property type="entry name" value="SH2"/>
    <property type="match status" value="2"/>
</dbReference>
<dbReference type="Pfam" id="PF00102">
    <property type="entry name" value="Y_phosphatase"/>
    <property type="match status" value="1"/>
</dbReference>
<dbReference type="PIRSF" id="PIRSF000929">
    <property type="entry name" value="Tyr-Ptase_nr_6"/>
    <property type="match status" value="1"/>
</dbReference>
<dbReference type="PRINTS" id="PR00700">
    <property type="entry name" value="PRTYPHPHTASE"/>
</dbReference>
<dbReference type="SMART" id="SM00194">
    <property type="entry name" value="PTPc"/>
    <property type="match status" value="1"/>
</dbReference>
<dbReference type="SMART" id="SM00404">
    <property type="entry name" value="PTPc_motif"/>
    <property type="match status" value="1"/>
</dbReference>
<dbReference type="SMART" id="SM00252">
    <property type="entry name" value="SH2"/>
    <property type="match status" value="2"/>
</dbReference>
<dbReference type="SUPFAM" id="SSF52799">
    <property type="entry name" value="(Phosphotyrosine protein) phosphatases II"/>
    <property type="match status" value="1"/>
</dbReference>
<dbReference type="SUPFAM" id="SSF55550">
    <property type="entry name" value="SH2 domain"/>
    <property type="match status" value="2"/>
</dbReference>
<dbReference type="PROSITE" id="PS50001">
    <property type="entry name" value="SH2"/>
    <property type="match status" value="2"/>
</dbReference>
<dbReference type="PROSITE" id="PS00383">
    <property type="entry name" value="TYR_PHOSPHATASE_1"/>
    <property type="match status" value="1"/>
</dbReference>
<dbReference type="PROSITE" id="PS50056">
    <property type="entry name" value="TYR_PHOSPHATASE_2"/>
    <property type="match status" value="1"/>
</dbReference>
<dbReference type="PROSITE" id="PS50055">
    <property type="entry name" value="TYR_PHOSPHATASE_PTP"/>
    <property type="match status" value="1"/>
</dbReference>
<protein>
    <recommendedName>
        <fullName evidence="10">Tyrosine-protein phosphatase non-receptor type ptp-2</fullName>
        <ecNumber evidence="1">3.1.3.48</ecNumber>
    </recommendedName>
    <alternativeName>
        <fullName evidence="13">Protein-tyrosine phosphatase 2</fullName>
    </alternativeName>
</protein>
<feature type="chain" id="PRO_0000435985" description="Tyrosine-protein phosphatase non-receptor type ptp-2" evidence="10">
    <location>
        <begin position="1"/>
        <end position="668"/>
    </location>
</feature>
<feature type="domain" description="SH2 1" evidence="3">
    <location>
        <begin position="10"/>
        <end position="113"/>
    </location>
</feature>
<feature type="domain" description="SH2 2" evidence="3">
    <location>
        <begin position="134"/>
        <end position="232"/>
    </location>
</feature>
<feature type="domain" description="Tyrosine-protein phosphatase" evidence="2">
    <location>
        <begin position="264"/>
        <end position="580"/>
    </location>
</feature>
<feature type="region of interest" description="Disordered" evidence="4">
    <location>
        <begin position="603"/>
        <end position="668"/>
    </location>
</feature>
<feature type="compositionally biased region" description="Low complexity" evidence="4">
    <location>
        <begin position="616"/>
        <end position="634"/>
    </location>
</feature>
<feature type="compositionally biased region" description="Low complexity" evidence="4">
    <location>
        <begin position="652"/>
        <end position="668"/>
    </location>
</feature>
<feature type="active site" description="Phosphocysteine intermediate" evidence="2">
    <location>
        <position position="518"/>
    </location>
</feature>
<feature type="mutagenesis site" description="Fails to rescue fluid accumulation in clr-1 e1745ts mutant." evidence="5">
    <original>R</original>
    <variation>E</variation>
    <location>
        <position position="36"/>
    </location>
</feature>
<feature type="mutagenesis site" description="Fails to rescue fluid accumulation in clr-1 e1745ts mutant." evidence="5">
    <original>R</original>
    <variation>E</variation>
    <location>
        <position position="159"/>
    </location>
</feature>
<feature type="mutagenesis site" description="Probable loss of phosphatase activity. Fails to rescue fluid accumulation in clr-1 e1745ts mutant." evidence="5">
    <original>C</original>
    <variation>S</variation>
    <location>
        <position position="518"/>
    </location>
</feature>
<organism evidence="12">
    <name type="scientific">Caenorhabditis elegans</name>
    <dbReference type="NCBI Taxonomy" id="6239"/>
    <lineage>
        <taxon>Eukaryota</taxon>
        <taxon>Metazoa</taxon>
        <taxon>Ecdysozoa</taxon>
        <taxon>Nematoda</taxon>
        <taxon>Chromadorea</taxon>
        <taxon>Rhabditida</taxon>
        <taxon>Rhabditina</taxon>
        <taxon>Rhabditomorpha</taxon>
        <taxon>Rhabditoidea</taxon>
        <taxon>Rhabditidae</taxon>
        <taxon>Peloderinae</taxon>
        <taxon>Caenorhabditis</taxon>
    </lineage>
</organism>
<comment type="function">
    <text evidence="5 6 7 8 9">Involved in embryonic and larval development (PubMed:20380830, PubMed:9472025). Plays a role in oogenesis by regulating mpk-1 phosphorylation and oocyte maturation in response to major sperm protein (MSP) (PubMed:20380830, PubMed:9472025). During the formation of neuromuscular junctions at the larval stage, negatively regulates membrane protrusion from body wall muscles probably downstream of receptor egl-15 (PubMed:16495308). Plays a role in fluid homeostasis probably downstream of receptor egl-15 and adapter soc-1 (PubMed:11689700). Promotes vulva induction and negatively regulates fertility probably downstream of receptor let-23 (PubMed:16547100, PubMed:9472025). Negatively regulates daf-2-mediated repression of dauer formation (PubMed:16547100).</text>
</comment>
<comment type="catalytic activity">
    <reaction evidence="1">
        <text>O-phospho-L-tyrosyl-[protein] + H2O = L-tyrosyl-[protein] + phosphate</text>
        <dbReference type="Rhea" id="RHEA:10684"/>
        <dbReference type="Rhea" id="RHEA-COMP:10136"/>
        <dbReference type="Rhea" id="RHEA-COMP:20101"/>
        <dbReference type="ChEBI" id="CHEBI:15377"/>
        <dbReference type="ChEBI" id="CHEBI:43474"/>
        <dbReference type="ChEBI" id="CHEBI:46858"/>
        <dbReference type="ChEBI" id="CHEBI:61978"/>
        <dbReference type="EC" id="3.1.3.48"/>
    </reaction>
</comment>
<comment type="subcellular location">
    <subcellularLocation>
        <location evidence="1 8">Cytoplasm</location>
    </subcellularLocation>
    <text evidence="8">Localizes to vesicle-like structures.</text>
</comment>
<comment type="tissue specificity">
    <text evidence="8">Expressed in embryonic cells, developing vulva, body wall muscles, head neurons and gonadal sheath cells.</text>
</comment>
<comment type="disruption phenotype">
    <text evidence="6 7">RNAi-mediated knockdown causes an increase in ectopic formation of membrane extensions from body wall muscles and a reduction in life span caused by early stage mortality (PubMed:16495308, PubMed:16547100). Prevents constitutive dauer formation in a daf-2 e1370 mutant background (PubMed:16547100).</text>
</comment>
<comment type="similarity">
    <text evidence="1">Belongs to the protein-tyrosine phosphatase family. Non-receptor class 2 subfamily.</text>
</comment>
<sequence>MPRLALRQYNFYYRVNGEKAEELLKEYGEDGDFLLRYSESNPQNFSISVRVAEDKILHIKVTKYESDMLSIFEDERTTPNQFGSITELAEFYMEFPEKLREKNGLFLELKKPVYVPYHLEACAEEQRRTQLYRWWHGNLPASSANKLLQTEKNGTYLLRASQHIPGALVISAKTEGQVVHLTIYQDPSTGRFNIDGDRTKFQSAWLLIDSYSKNPIVEKGEASRVLYLEEPLFNTFIEADLFVDRFEIIRRPINPRESMEKTGISEEFDRLSQEALPAEQYLSKREGRRPVNAEKNRYKNIVPFDHTRVILTDRPNTPGSDYINASYVRFENSQRTKNVTFACEKSFIATQGCLETTISDFWSMVWQENSRVIVMPTMENERKEKCARYWPAEVNKPEVHGDISLTCTIERKVQRAVSDEVKAELEQEKTNRIAKGLVPEAELNGDGISYILRTLVMKKGKDTREIRQLQYLTWPDHGCPLHPYAVLNFLEDVDREYDYFNAQPIAASLPQGPIVVHCSAGIGRTGTVLVLDALLNQVKKVGLLCPMDVYKMVKYVRTYRSGLVQTEQQYQFLYKALAFYLKNNNPYPVKSFIDGDTDAFDFPRRLRPTPNASRPSSARQVTSSRPSSSASSRTSHSRPRTGPQAEPIFERSTSSTSSSSTLLKSTKK</sequence>